<accession>Q8KA26</accession>
<reference key="1">
    <citation type="journal article" date="2002" name="Science">
        <title>50 million years of genomic stasis in endosymbiotic bacteria.</title>
        <authorList>
            <person name="Tamas I."/>
            <person name="Klasson L."/>
            <person name="Canbaeck B."/>
            <person name="Naeslund A.K."/>
            <person name="Eriksson A.-S."/>
            <person name="Wernegreen J.J."/>
            <person name="Sandstroem J.P."/>
            <person name="Moran N.A."/>
            <person name="Andersson S.G.E."/>
        </authorList>
    </citation>
    <scope>NUCLEOTIDE SEQUENCE [LARGE SCALE GENOMIC DNA]</scope>
    <source>
        <strain>Sg</strain>
    </source>
</reference>
<name>TKT_BUCAP</name>
<keyword id="KW-0106">Calcium</keyword>
<keyword id="KW-0460">Magnesium</keyword>
<keyword id="KW-0479">Metal-binding</keyword>
<keyword id="KW-0786">Thiamine pyrophosphate</keyword>
<keyword id="KW-0808">Transferase</keyword>
<sequence length="665" mass="75054">MCVRRELANAIRMLSIDAVQNAKSGHPGMPMGMADIAEVLWRKFFKHSPTNPNWNNRDRFILSNGHGSMLLYSLLHLTGYDLSIDELKKFRQLHSKTPGHPETGETPGVETTTGPLGQGLANAVGMAIAERTLSAYFNRPDYDIVDHYTWVFVGDGCLMEGISHEVCSLAGTLKLGKLIVFYDKNGISIDGKISNWFTDDTVMRFKSYNWHVVDKVDGHDANSIKNSIEEAKSVKDQPSIIICNTIIGFGSPNKSGTADSHGAPLGEEEIFLTRKNLNWKYSPFEIPNKIYDKWNFVKQGLKLEENWNKQFHLYKSEYPALAEEYSRRIKKKLPTQWYKKTKDYIFNLQKNPQNIATRKASQNAIEEFAALLPELIGGSADLSPSNLTMWSKSSSITENLCGNYIHYGVREFGMTAIANGISHHGGFIPYTSTFLMFVEYARNAVRMAALMNTKHIFVYTHDSIGLGEDGPTHQPIEQLANLRMTPNIDVWRPSDQVETAVAWKYAIEEKNGPTALILSRQNLFQFSRNNEQIKNISYGAYILYDSKKPIDIIFISTGSELQITLTSAKKIAALGYSVRVVSMPSNNVFDRQNIDYKESILPSYITKRIVIEASIKDFWYKYAGSEGLIIGMETFGESASEEVLFKKFGFTVENIVNKSKILLKH</sequence>
<evidence type="ECO:0000250" key="1"/>
<evidence type="ECO:0000305" key="2"/>
<feature type="chain" id="PRO_0000191854" description="Transketolase">
    <location>
        <begin position="1"/>
        <end position="665"/>
    </location>
</feature>
<feature type="active site" description="Proton donor" evidence="1">
    <location>
        <position position="411"/>
    </location>
</feature>
<feature type="binding site" evidence="1">
    <location>
        <position position="26"/>
    </location>
    <ligand>
        <name>substrate</name>
    </ligand>
</feature>
<feature type="binding site" evidence="1">
    <location>
        <position position="66"/>
    </location>
    <ligand>
        <name>thiamine diphosphate</name>
        <dbReference type="ChEBI" id="CHEBI:58937"/>
    </ligand>
</feature>
<feature type="binding site" evidence="1">
    <location>
        <begin position="114"/>
        <end position="116"/>
    </location>
    <ligand>
        <name>thiamine diphosphate</name>
        <dbReference type="ChEBI" id="CHEBI:58937"/>
    </ligand>
</feature>
<feature type="binding site" evidence="1">
    <location>
        <position position="155"/>
    </location>
    <ligand>
        <name>Mg(2+)</name>
        <dbReference type="ChEBI" id="CHEBI:18420"/>
    </ligand>
</feature>
<feature type="binding site" evidence="1">
    <location>
        <position position="156"/>
    </location>
    <ligand>
        <name>thiamine diphosphate</name>
        <dbReference type="ChEBI" id="CHEBI:58937"/>
    </ligand>
</feature>
<feature type="binding site" evidence="1">
    <location>
        <position position="185"/>
    </location>
    <ligand>
        <name>Mg(2+)</name>
        <dbReference type="ChEBI" id="CHEBI:18420"/>
    </ligand>
</feature>
<feature type="binding site" evidence="1">
    <location>
        <position position="185"/>
    </location>
    <ligand>
        <name>thiamine diphosphate</name>
        <dbReference type="ChEBI" id="CHEBI:58937"/>
    </ligand>
</feature>
<feature type="binding site" evidence="1">
    <location>
        <position position="187"/>
    </location>
    <ligand>
        <name>Mg(2+)</name>
        <dbReference type="ChEBI" id="CHEBI:18420"/>
    </ligand>
</feature>
<feature type="binding site" evidence="1">
    <location>
        <position position="261"/>
    </location>
    <ligand>
        <name>substrate</name>
    </ligand>
</feature>
<feature type="binding site" evidence="1">
    <location>
        <position position="261"/>
    </location>
    <ligand>
        <name>thiamine diphosphate</name>
        <dbReference type="ChEBI" id="CHEBI:58937"/>
    </ligand>
</feature>
<feature type="binding site" evidence="1">
    <location>
        <position position="358"/>
    </location>
    <ligand>
        <name>substrate</name>
    </ligand>
</feature>
<feature type="binding site" evidence="1">
    <location>
        <position position="385"/>
    </location>
    <ligand>
        <name>substrate</name>
    </ligand>
</feature>
<feature type="binding site" evidence="1">
    <location>
        <position position="437"/>
    </location>
    <ligand>
        <name>thiamine diphosphate</name>
        <dbReference type="ChEBI" id="CHEBI:58937"/>
    </ligand>
</feature>
<feature type="binding site" evidence="1">
    <location>
        <position position="461"/>
    </location>
    <ligand>
        <name>substrate</name>
    </ligand>
</feature>
<feature type="binding site" evidence="1">
    <location>
        <position position="469"/>
    </location>
    <ligand>
        <name>substrate</name>
    </ligand>
</feature>
<feature type="binding site" evidence="1">
    <location>
        <position position="520"/>
    </location>
    <ligand>
        <name>substrate</name>
    </ligand>
</feature>
<feature type="site" description="Important for catalytic activity" evidence="1">
    <location>
        <position position="26"/>
    </location>
</feature>
<feature type="site" description="Important for catalytic activity" evidence="1">
    <location>
        <position position="261"/>
    </location>
</feature>
<proteinExistence type="inferred from homology"/>
<protein>
    <recommendedName>
        <fullName>Transketolase</fullName>
        <shortName>TK</shortName>
        <ecNumber>2.2.1.1</ecNumber>
    </recommendedName>
</protein>
<gene>
    <name type="primary">tkt</name>
    <name type="ordered locus">BUsg_086</name>
</gene>
<dbReference type="EC" id="2.2.1.1"/>
<dbReference type="EMBL" id="AE013218">
    <property type="protein sequence ID" value="AAM67656.1"/>
    <property type="molecule type" value="Genomic_DNA"/>
</dbReference>
<dbReference type="RefSeq" id="WP_011053622.1">
    <property type="nucleotide sequence ID" value="NC_004061.1"/>
</dbReference>
<dbReference type="SMR" id="Q8KA26"/>
<dbReference type="STRING" id="198804.BUsg_086"/>
<dbReference type="GeneID" id="93003554"/>
<dbReference type="KEGG" id="bas:BUsg_086"/>
<dbReference type="eggNOG" id="COG0021">
    <property type="taxonomic scope" value="Bacteria"/>
</dbReference>
<dbReference type="HOGENOM" id="CLU_009227_0_0_6"/>
<dbReference type="Proteomes" id="UP000000416">
    <property type="component" value="Chromosome"/>
</dbReference>
<dbReference type="GO" id="GO:0005829">
    <property type="term" value="C:cytosol"/>
    <property type="evidence" value="ECO:0007669"/>
    <property type="project" value="TreeGrafter"/>
</dbReference>
<dbReference type="GO" id="GO:0046872">
    <property type="term" value="F:metal ion binding"/>
    <property type="evidence" value="ECO:0007669"/>
    <property type="project" value="UniProtKB-KW"/>
</dbReference>
<dbReference type="GO" id="GO:0004802">
    <property type="term" value="F:transketolase activity"/>
    <property type="evidence" value="ECO:0007669"/>
    <property type="project" value="UniProtKB-EC"/>
</dbReference>
<dbReference type="GO" id="GO:0006098">
    <property type="term" value="P:pentose-phosphate shunt"/>
    <property type="evidence" value="ECO:0007669"/>
    <property type="project" value="TreeGrafter"/>
</dbReference>
<dbReference type="CDD" id="cd07033">
    <property type="entry name" value="TPP_PYR_DXS_TK_like"/>
    <property type="match status" value="1"/>
</dbReference>
<dbReference type="CDD" id="cd02012">
    <property type="entry name" value="TPP_TK"/>
    <property type="match status" value="1"/>
</dbReference>
<dbReference type="FunFam" id="3.40.50.920:FF:000003">
    <property type="entry name" value="Transketolase"/>
    <property type="match status" value="1"/>
</dbReference>
<dbReference type="FunFam" id="3.40.50.970:FF:000003">
    <property type="entry name" value="Transketolase"/>
    <property type="match status" value="1"/>
</dbReference>
<dbReference type="FunFam" id="3.40.50.970:FF:000004">
    <property type="entry name" value="Transketolase"/>
    <property type="match status" value="1"/>
</dbReference>
<dbReference type="Gene3D" id="3.40.50.920">
    <property type="match status" value="1"/>
</dbReference>
<dbReference type="Gene3D" id="3.40.50.970">
    <property type="match status" value="2"/>
</dbReference>
<dbReference type="InterPro" id="IPR029061">
    <property type="entry name" value="THDP-binding"/>
</dbReference>
<dbReference type="InterPro" id="IPR009014">
    <property type="entry name" value="Transketo_C/PFOR_II"/>
</dbReference>
<dbReference type="InterPro" id="IPR055152">
    <property type="entry name" value="Transketolase-like_C_2"/>
</dbReference>
<dbReference type="InterPro" id="IPR005475">
    <property type="entry name" value="Transketolase-like_Pyr-bd"/>
</dbReference>
<dbReference type="InterPro" id="IPR005478">
    <property type="entry name" value="Transketolase_bac-like"/>
</dbReference>
<dbReference type="InterPro" id="IPR020826">
    <property type="entry name" value="Transketolase_BS"/>
</dbReference>
<dbReference type="InterPro" id="IPR049557">
    <property type="entry name" value="Transketolase_CS"/>
</dbReference>
<dbReference type="InterPro" id="IPR033247">
    <property type="entry name" value="Transketolase_fam"/>
</dbReference>
<dbReference type="InterPro" id="IPR005474">
    <property type="entry name" value="Transketolase_N"/>
</dbReference>
<dbReference type="NCBIfam" id="TIGR00232">
    <property type="entry name" value="tktlase_bact"/>
    <property type="match status" value="1"/>
</dbReference>
<dbReference type="PANTHER" id="PTHR43522">
    <property type="entry name" value="TRANSKETOLASE"/>
    <property type="match status" value="1"/>
</dbReference>
<dbReference type="PANTHER" id="PTHR43522:SF13">
    <property type="entry name" value="TRANSKETOLASE 2"/>
    <property type="match status" value="1"/>
</dbReference>
<dbReference type="Pfam" id="PF02779">
    <property type="entry name" value="Transket_pyr"/>
    <property type="match status" value="1"/>
</dbReference>
<dbReference type="Pfam" id="PF22613">
    <property type="entry name" value="Transketolase_C_1"/>
    <property type="match status" value="1"/>
</dbReference>
<dbReference type="Pfam" id="PF00456">
    <property type="entry name" value="Transketolase_N"/>
    <property type="match status" value="1"/>
</dbReference>
<dbReference type="SMART" id="SM00861">
    <property type="entry name" value="Transket_pyr"/>
    <property type="match status" value="1"/>
</dbReference>
<dbReference type="SUPFAM" id="SSF52518">
    <property type="entry name" value="Thiamin diphosphate-binding fold (THDP-binding)"/>
    <property type="match status" value="2"/>
</dbReference>
<dbReference type="SUPFAM" id="SSF52922">
    <property type="entry name" value="TK C-terminal domain-like"/>
    <property type="match status" value="1"/>
</dbReference>
<dbReference type="PROSITE" id="PS00801">
    <property type="entry name" value="TRANSKETOLASE_1"/>
    <property type="match status" value="1"/>
</dbReference>
<dbReference type="PROSITE" id="PS00802">
    <property type="entry name" value="TRANSKETOLASE_2"/>
    <property type="match status" value="1"/>
</dbReference>
<organism>
    <name type="scientific">Buchnera aphidicola subsp. Schizaphis graminum (strain Sg)</name>
    <dbReference type="NCBI Taxonomy" id="198804"/>
    <lineage>
        <taxon>Bacteria</taxon>
        <taxon>Pseudomonadati</taxon>
        <taxon>Pseudomonadota</taxon>
        <taxon>Gammaproteobacteria</taxon>
        <taxon>Enterobacterales</taxon>
        <taxon>Erwiniaceae</taxon>
        <taxon>Buchnera</taxon>
    </lineage>
</organism>
<comment type="function">
    <text evidence="1">Catalyzes the transfer of a two-carbon ketol group from a ketose donor to an aldose acceptor, via a covalent intermediate with the cofactor thiamine pyrophosphate.</text>
</comment>
<comment type="catalytic activity">
    <reaction>
        <text>D-sedoheptulose 7-phosphate + D-glyceraldehyde 3-phosphate = aldehydo-D-ribose 5-phosphate + D-xylulose 5-phosphate</text>
        <dbReference type="Rhea" id="RHEA:10508"/>
        <dbReference type="ChEBI" id="CHEBI:57483"/>
        <dbReference type="ChEBI" id="CHEBI:57737"/>
        <dbReference type="ChEBI" id="CHEBI:58273"/>
        <dbReference type="ChEBI" id="CHEBI:59776"/>
        <dbReference type="EC" id="2.2.1.1"/>
    </reaction>
</comment>
<comment type="cofactor">
    <cofactor evidence="1">
        <name>Mg(2+)</name>
        <dbReference type="ChEBI" id="CHEBI:18420"/>
    </cofactor>
    <cofactor evidence="1">
        <name>Ca(2+)</name>
        <dbReference type="ChEBI" id="CHEBI:29108"/>
    </cofactor>
    <cofactor evidence="1">
        <name>Mn(2+)</name>
        <dbReference type="ChEBI" id="CHEBI:29035"/>
    </cofactor>
    <cofactor evidence="1">
        <name>Co(2+)</name>
        <dbReference type="ChEBI" id="CHEBI:48828"/>
    </cofactor>
    <text evidence="1">Binds 1 Mg(2+) ion per subunit. Can also utilize other divalent metal cations, such as Ca(2+), Mn(2+) and Co(2+).</text>
</comment>
<comment type="cofactor">
    <cofactor evidence="1">
        <name>thiamine diphosphate</name>
        <dbReference type="ChEBI" id="CHEBI:58937"/>
    </cofactor>
    <text evidence="1">Binds 1 thiamine pyrophosphate per subunit.</text>
</comment>
<comment type="subunit">
    <text evidence="1">Homodimer.</text>
</comment>
<comment type="similarity">
    <text evidence="2">Belongs to the transketolase family.</text>
</comment>